<reference key="1">
    <citation type="journal article" date="2004" name="Nature">
        <title>Genome evolution in yeasts.</title>
        <authorList>
            <person name="Dujon B."/>
            <person name="Sherman D."/>
            <person name="Fischer G."/>
            <person name="Durrens P."/>
            <person name="Casaregola S."/>
            <person name="Lafontaine I."/>
            <person name="de Montigny J."/>
            <person name="Marck C."/>
            <person name="Neuveglise C."/>
            <person name="Talla E."/>
            <person name="Goffard N."/>
            <person name="Frangeul L."/>
            <person name="Aigle M."/>
            <person name="Anthouard V."/>
            <person name="Babour A."/>
            <person name="Barbe V."/>
            <person name="Barnay S."/>
            <person name="Blanchin S."/>
            <person name="Beckerich J.-M."/>
            <person name="Beyne E."/>
            <person name="Bleykasten C."/>
            <person name="Boisrame A."/>
            <person name="Boyer J."/>
            <person name="Cattolico L."/>
            <person name="Confanioleri F."/>
            <person name="de Daruvar A."/>
            <person name="Despons L."/>
            <person name="Fabre E."/>
            <person name="Fairhead C."/>
            <person name="Ferry-Dumazet H."/>
            <person name="Groppi A."/>
            <person name="Hantraye F."/>
            <person name="Hennequin C."/>
            <person name="Jauniaux N."/>
            <person name="Joyet P."/>
            <person name="Kachouri R."/>
            <person name="Kerrest A."/>
            <person name="Koszul R."/>
            <person name="Lemaire M."/>
            <person name="Lesur I."/>
            <person name="Ma L."/>
            <person name="Muller H."/>
            <person name="Nicaud J.-M."/>
            <person name="Nikolski M."/>
            <person name="Oztas S."/>
            <person name="Ozier-Kalogeropoulos O."/>
            <person name="Pellenz S."/>
            <person name="Potier S."/>
            <person name="Richard G.-F."/>
            <person name="Straub M.-L."/>
            <person name="Suleau A."/>
            <person name="Swennen D."/>
            <person name="Tekaia F."/>
            <person name="Wesolowski-Louvel M."/>
            <person name="Westhof E."/>
            <person name="Wirth B."/>
            <person name="Zeniou-Meyer M."/>
            <person name="Zivanovic Y."/>
            <person name="Bolotin-Fukuhara M."/>
            <person name="Thierry A."/>
            <person name="Bouchier C."/>
            <person name="Caudron B."/>
            <person name="Scarpelli C."/>
            <person name="Gaillardin C."/>
            <person name="Weissenbach J."/>
            <person name="Wincker P."/>
            <person name="Souciet J.-L."/>
        </authorList>
    </citation>
    <scope>NUCLEOTIDE SEQUENCE [LARGE SCALE GENOMIC DNA]</scope>
    <source>
        <strain>ATCC 2001 / BCRC 20586 / JCM 3761 / NBRC 0622 / NRRL Y-65 / CBS 138</strain>
    </source>
</reference>
<proteinExistence type="inferred from homology"/>
<accession>Q6FIN2</accession>
<keyword id="KW-0131">Cell cycle</keyword>
<keyword id="KW-0132">Cell division</keyword>
<keyword id="KW-0137">Centromere</keyword>
<keyword id="KW-0158">Chromosome</keyword>
<keyword id="KW-0159">Chromosome partition</keyword>
<keyword id="KW-0963">Cytoplasm</keyword>
<keyword id="KW-0206">Cytoskeleton</keyword>
<keyword id="KW-0995">Kinetochore</keyword>
<keyword id="KW-0493">Microtubule</keyword>
<keyword id="KW-0498">Mitosis</keyword>
<keyword id="KW-0539">Nucleus</keyword>
<keyword id="KW-1185">Reference proteome</keyword>
<name>ASK1_CANGA</name>
<dbReference type="EMBL" id="CR380959">
    <property type="protein sequence ID" value="CAG62892.1"/>
    <property type="molecule type" value="Genomic_DNA"/>
</dbReference>
<dbReference type="RefSeq" id="XP_449912.1">
    <property type="nucleotide sequence ID" value="XM_449912.1"/>
</dbReference>
<dbReference type="SMR" id="Q6FIN2"/>
<dbReference type="STRING" id="284593.Q6FIN2"/>
<dbReference type="EnsemblFungi" id="CAGL0M13079g-T">
    <property type="protein sequence ID" value="CAGL0M13079g-T-p1"/>
    <property type="gene ID" value="CAGL0M13079g"/>
</dbReference>
<dbReference type="KEGG" id="cgr:2891202"/>
<dbReference type="CGD" id="CAL0137427">
    <property type="gene designation" value="CAGL0M13079g"/>
</dbReference>
<dbReference type="VEuPathDB" id="FungiDB:CAGL0M13079g"/>
<dbReference type="eggNOG" id="ENOG502S2V2">
    <property type="taxonomic scope" value="Eukaryota"/>
</dbReference>
<dbReference type="HOGENOM" id="CLU_090087_0_0_1"/>
<dbReference type="InParanoid" id="Q6FIN2"/>
<dbReference type="OMA" id="EICERIM"/>
<dbReference type="Proteomes" id="UP000002428">
    <property type="component" value="Chromosome M"/>
</dbReference>
<dbReference type="GO" id="GO:0005737">
    <property type="term" value="C:cytoplasm"/>
    <property type="evidence" value="ECO:0007669"/>
    <property type="project" value="UniProtKB-KW"/>
</dbReference>
<dbReference type="GO" id="GO:0042729">
    <property type="term" value="C:DASH complex"/>
    <property type="evidence" value="ECO:0000250"/>
    <property type="project" value="UniProtKB"/>
</dbReference>
<dbReference type="GO" id="GO:0005874">
    <property type="term" value="C:microtubule"/>
    <property type="evidence" value="ECO:0007669"/>
    <property type="project" value="UniProtKB-KW"/>
</dbReference>
<dbReference type="GO" id="GO:0072686">
    <property type="term" value="C:mitotic spindle"/>
    <property type="evidence" value="ECO:0007669"/>
    <property type="project" value="InterPro"/>
</dbReference>
<dbReference type="GO" id="GO:0044732">
    <property type="term" value="C:mitotic spindle pole body"/>
    <property type="evidence" value="ECO:0007669"/>
    <property type="project" value="TreeGrafter"/>
</dbReference>
<dbReference type="GO" id="GO:0051010">
    <property type="term" value="F:microtubule plus-end binding"/>
    <property type="evidence" value="ECO:0007669"/>
    <property type="project" value="EnsemblFungi"/>
</dbReference>
<dbReference type="GO" id="GO:0051301">
    <property type="term" value="P:cell division"/>
    <property type="evidence" value="ECO:0007669"/>
    <property type="project" value="UniProtKB-KW"/>
</dbReference>
<dbReference type="GO" id="GO:1990758">
    <property type="term" value="P:mitotic sister chromatid biorientation"/>
    <property type="evidence" value="ECO:0000250"/>
    <property type="project" value="UniProtKB"/>
</dbReference>
<dbReference type="GO" id="GO:0051987">
    <property type="term" value="P:positive regulation of attachment of spindle microtubules to kinetochore"/>
    <property type="evidence" value="ECO:0007669"/>
    <property type="project" value="EnsemblFungi"/>
</dbReference>
<dbReference type="GO" id="GO:0031116">
    <property type="term" value="P:positive regulation of microtubule polymerization"/>
    <property type="evidence" value="ECO:0007669"/>
    <property type="project" value="EnsemblFungi"/>
</dbReference>
<dbReference type="GO" id="GO:1990976">
    <property type="term" value="P:protein transport along microtubule to mitotic spindle pole body"/>
    <property type="evidence" value="ECO:0000250"/>
    <property type="project" value="UniProtKB"/>
</dbReference>
<dbReference type="InterPro" id="IPR013964">
    <property type="entry name" value="DASH_Ask1"/>
</dbReference>
<dbReference type="PANTHER" id="PTHR28200">
    <property type="entry name" value="DASH COMPLEX SUBUNIT ASK1"/>
    <property type="match status" value="1"/>
</dbReference>
<dbReference type="PANTHER" id="PTHR28200:SF1">
    <property type="entry name" value="DASH COMPLEX SUBUNIT ASK1"/>
    <property type="match status" value="1"/>
</dbReference>
<dbReference type="Pfam" id="PF08655">
    <property type="entry name" value="DASH_Ask1"/>
    <property type="match status" value="1"/>
</dbReference>
<sequence length="204" mass="22429">MDRELERLDQEITLELQKIDGNLSHCFDVITKQVIPRVVAYGQVCDAISDSCEWLGTLCKSSGVVDLKRDVLLERTPVRDSDAHGNAHGDTHGNAHGDAHGEANAERSYGDVAGGEEHNSTVQSEVSDSTMGKYREDDTREQGEDDSVQRQKKRKVSLLIQERYGSSSSVMPSPDKRVPQQSLGSSPVKEQVPLPGTVIHFSTK</sequence>
<feature type="chain" id="PRO_0000211314" description="DASH complex subunit ASK1">
    <location>
        <begin position="1"/>
        <end position="204"/>
    </location>
</feature>
<feature type="region of interest" description="Disordered" evidence="3">
    <location>
        <begin position="78"/>
        <end position="204"/>
    </location>
</feature>
<feature type="compositionally biased region" description="Basic and acidic residues" evidence="3">
    <location>
        <begin position="78"/>
        <end position="119"/>
    </location>
</feature>
<feature type="compositionally biased region" description="Polar residues" evidence="3">
    <location>
        <begin position="120"/>
        <end position="130"/>
    </location>
</feature>
<feature type="compositionally biased region" description="Basic and acidic residues" evidence="3">
    <location>
        <begin position="133"/>
        <end position="142"/>
    </location>
</feature>
<evidence type="ECO:0000250" key="1">
    <source>
        <dbReference type="UniProtKB" id="P35734"/>
    </source>
</evidence>
<evidence type="ECO:0000250" key="2">
    <source>
        <dbReference type="UniProtKB" id="Q9P6S5"/>
    </source>
</evidence>
<evidence type="ECO:0000256" key="3">
    <source>
        <dbReference type="SAM" id="MobiDB-lite"/>
    </source>
</evidence>
<evidence type="ECO:0000305" key="4"/>
<gene>
    <name type="primary">ASK1</name>
    <name type="ordered locus">CAGL0M13079g</name>
</gene>
<protein>
    <recommendedName>
        <fullName>DASH complex subunit ASK1</fullName>
    </recommendedName>
    <alternativeName>
        <fullName>Associated with spindles and kinetochores protein 1</fullName>
    </alternativeName>
    <alternativeName>
        <fullName>Outer kinetochore protein ASK1</fullName>
    </alternativeName>
</protein>
<organism>
    <name type="scientific">Candida glabrata (strain ATCC 2001 / BCRC 20586 / JCM 3761 / NBRC 0622 / NRRL Y-65 / CBS 138)</name>
    <name type="common">Yeast</name>
    <name type="synonym">Nakaseomyces glabratus</name>
    <dbReference type="NCBI Taxonomy" id="284593"/>
    <lineage>
        <taxon>Eukaryota</taxon>
        <taxon>Fungi</taxon>
        <taxon>Dikarya</taxon>
        <taxon>Ascomycota</taxon>
        <taxon>Saccharomycotina</taxon>
        <taxon>Saccharomycetes</taxon>
        <taxon>Saccharomycetales</taxon>
        <taxon>Saccharomycetaceae</taxon>
        <taxon>Nakaseomyces</taxon>
    </lineage>
</organism>
<comment type="function">
    <text evidence="1">Component of the DASH complex that connects microtubules with kinetochores and couples microtubule depolymerisation to chromosome movement; it is involved in retrieving kinetochores to the spindle poles before their re-orientation on the spindle in early mitosis and allows microtubule depolymerization to pull chromosomes apart and resist detachment during anaphase. Kinetochores, consisting of a centromere-associated inner segment and a microtubule-contacting outer segment, play a crucial role in chromosome segregation by mediating the physical connection between centromeric DNA and microtubules. Kinetochores also serve as an input point for the spindle assembly checkpoint, which delays anaphase until all chromosomes have bioriented on the mitotic spindle.</text>
</comment>
<comment type="subunit">
    <text evidence="1 2">Component of the DASH complex consisting of ASK1, DAD1, DAD2, DAD3, DAD4, DAM1, DUO1, HSK3, SPC19 and SPC34, with a stoichiometry of one copy of each subunit per complex. Multiple DASH complexes oligomerize to form a ring that encircles spindle microtubules and organizes the rod-like NDC80 complexes of the outer kinetochore. DASH complex oligomerization strengthens microtubule attachments (By similarity). On cytoplasmic microtubules, DASH complexes appear to form patches instead of rings (By similarity).</text>
</comment>
<comment type="subcellular location">
    <subcellularLocation>
        <location evidence="1">Nucleus</location>
    </subcellularLocation>
    <subcellularLocation>
        <location evidence="1">Cytoplasm</location>
        <location evidence="1">Cytoskeleton</location>
        <location evidence="1">Spindle</location>
    </subcellularLocation>
    <subcellularLocation>
        <location evidence="1">Chromosome</location>
        <location evidence="1">Centromere</location>
        <location evidence="1">Kinetochore</location>
    </subcellularLocation>
</comment>
<comment type="similarity">
    <text evidence="4">Belongs to the DASH complex ASK1 family.</text>
</comment>